<organism>
    <name type="scientific">Homo sapiens</name>
    <name type="common">Human</name>
    <dbReference type="NCBI Taxonomy" id="9606"/>
    <lineage>
        <taxon>Eukaryota</taxon>
        <taxon>Metazoa</taxon>
        <taxon>Chordata</taxon>
        <taxon>Craniata</taxon>
        <taxon>Vertebrata</taxon>
        <taxon>Euteleostomi</taxon>
        <taxon>Mammalia</taxon>
        <taxon>Eutheria</taxon>
        <taxon>Euarchontoglires</taxon>
        <taxon>Primates</taxon>
        <taxon>Haplorrhini</taxon>
        <taxon>Catarrhini</taxon>
        <taxon>Hominidae</taxon>
        <taxon>Homo</taxon>
    </lineage>
</organism>
<reference key="1">
    <citation type="journal article" date="2003" name="Nature">
        <title>The DNA sequence of human chromosome 7.</title>
        <authorList>
            <person name="Hillier L.W."/>
            <person name="Fulton R.S."/>
            <person name="Fulton L.A."/>
            <person name="Graves T.A."/>
            <person name="Pepin K.H."/>
            <person name="Wagner-McPherson C."/>
            <person name="Layman D."/>
            <person name="Maas J."/>
            <person name="Jaeger S."/>
            <person name="Walker R."/>
            <person name="Wylie K."/>
            <person name="Sekhon M."/>
            <person name="Becker M.C."/>
            <person name="O'Laughlin M.D."/>
            <person name="Schaller M.E."/>
            <person name="Fewell G.A."/>
            <person name="Delehaunty K.D."/>
            <person name="Miner T.L."/>
            <person name="Nash W.E."/>
            <person name="Cordes M."/>
            <person name="Du H."/>
            <person name="Sun H."/>
            <person name="Edwards J."/>
            <person name="Bradshaw-Cordum H."/>
            <person name="Ali J."/>
            <person name="Andrews S."/>
            <person name="Isak A."/>
            <person name="Vanbrunt A."/>
            <person name="Nguyen C."/>
            <person name="Du F."/>
            <person name="Lamar B."/>
            <person name="Courtney L."/>
            <person name="Kalicki J."/>
            <person name="Ozersky P."/>
            <person name="Bielicki L."/>
            <person name="Scott K."/>
            <person name="Holmes A."/>
            <person name="Harkins R."/>
            <person name="Harris A."/>
            <person name="Strong C.M."/>
            <person name="Hou S."/>
            <person name="Tomlinson C."/>
            <person name="Dauphin-Kohlberg S."/>
            <person name="Kozlowicz-Reilly A."/>
            <person name="Leonard S."/>
            <person name="Rohlfing T."/>
            <person name="Rock S.M."/>
            <person name="Tin-Wollam A.-M."/>
            <person name="Abbott A."/>
            <person name="Minx P."/>
            <person name="Maupin R."/>
            <person name="Strowmatt C."/>
            <person name="Latreille P."/>
            <person name="Miller N."/>
            <person name="Johnson D."/>
            <person name="Murray J."/>
            <person name="Woessner J.P."/>
            <person name="Wendl M.C."/>
            <person name="Yang S.-P."/>
            <person name="Schultz B.R."/>
            <person name="Wallis J.W."/>
            <person name="Spieth J."/>
            <person name="Bieri T.A."/>
            <person name="Nelson J.O."/>
            <person name="Berkowicz N."/>
            <person name="Wohldmann P.E."/>
            <person name="Cook L.L."/>
            <person name="Hickenbotham M.T."/>
            <person name="Eldred J."/>
            <person name="Williams D."/>
            <person name="Bedell J.A."/>
            <person name="Mardis E.R."/>
            <person name="Clifton S.W."/>
            <person name="Chissoe S.L."/>
            <person name="Marra M.A."/>
            <person name="Raymond C."/>
            <person name="Haugen E."/>
            <person name="Gillett W."/>
            <person name="Zhou Y."/>
            <person name="James R."/>
            <person name="Phelps K."/>
            <person name="Iadanoto S."/>
            <person name="Bubb K."/>
            <person name="Simms E."/>
            <person name="Levy R."/>
            <person name="Clendenning J."/>
            <person name="Kaul R."/>
            <person name="Kent W.J."/>
            <person name="Furey T.S."/>
            <person name="Baertsch R.A."/>
            <person name="Brent M.R."/>
            <person name="Keibler E."/>
            <person name="Flicek P."/>
            <person name="Bork P."/>
            <person name="Suyama M."/>
            <person name="Bailey J.A."/>
            <person name="Portnoy M.E."/>
            <person name="Torrents D."/>
            <person name="Chinwalla A.T."/>
            <person name="Gish W.R."/>
            <person name="Eddy S.R."/>
            <person name="McPherson J.D."/>
            <person name="Olson M.V."/>
            <person name="Eichler E.E."/>
            <person name="Green E.D."/>
            <person name="Waterston R.H."/>
            <person name="Wilson R.K."/>
        </authorList>
    </citation>
    <scope>NUCLEOTIDE SEQUENCE [LARGE SCALE GENOMIC DNA]</scope>
</reference>
<reference key="2">
    <citation type="journal article" date="2009" name="Chem. Biol.">
        <title>Docking motif-guided mapping of the interactome of protein phosphatase-1.</title>
        <authorList>
            <person name="Hendrickx A."/>
            <person name="Beullens M."/>
            <person name="Ceulemans H."/>
            <person name="Den Abt T."/>
            <person name="Van Eynde A."/>
            <person name="Nicolaescu E."/>
            <person name="Lesage B."/>
            <person name="Bollen M."/>
        </authorList>
    </citation>
    <scope>FUNCTION</scope>
    <scope>INTERACTION WITH PPP1CA</scope>
</reference>
<reference key="3">
    <citation type="journal article" date="2014" name="J. Proteomics">
        <title>An enzyme assisted RP-RPLC approach for in-depth analysis of human liver phosphoproteome.</title>
        <authorList>
            <person name="Bian Y."/>
            <person name="Song C."/>
            <person name="Cheng K."/>
            <person name="Dong M."/>
            <person name="Wang F."/>
            <person name="Huang J."/>
            <person name="Sun D."/>
            <person name="Wang L."/>
            <person name="Ye M."/>
            <person name="Zou H."/>
        </authorList>
    </citation>
    <scope>PHOSPHORYLATION [LARGE SCALE ANALYSIS] AT SER-461 AND SER-645</scope>
    <scope>IDENTIFICATION BY MASS SPECTROMETRY [LARGE SCALE ANALYSIS]</scope>
    <source>
        <tissue>Liver</tissue>
    </source>
</reference>
<gene>
    <name type="primary">ELFN1</name>
    <name type="synonym">PPP1R28</name>
</gene>
<accession>P0C7U0</accession>
<accession>H3BS57</accession>
<feature type="signal peptide" evidence="2">
    <location>
        <begin position="1"/>
        <end position="27"/>
    </location>
</feature>
<feature type="chain" id="PRO_0000343738" description="Protein ELFN1">
    <location>
        <begin position="28"/>
        <end position="828"/>
    </location>
</feature>
<feature type="topological domain" description="Extracellular" evidence="2">
    <location>
        <begin position="28"/>
        <end position="418"/>
    </location>
</feature>
<feature type="transmembrane region" description="Helical" evidence="2">
    <location>
        <begin position="419"/>
        <end position="439"/>
    </location>
</feature>
<feature type="topological domain" description="Cytoplasmic" evidence="2">
    <location>
        <begin position="440"/>
        <end position="828"/>
    </location>
</feature>
<feature type="repeat" description="LRR 1">
    <location>
        <begin position="61"/>
        <end position="82"/>
    </location>
</feature>
<feature type="repeat" description="LRR 2">
    <location>
        <begin position="85"/>
        <end position="106"/>
    </location>
</feature>
<feature type="repeat" description="LRR 3">
    <location>
        <begin position="109"/>
        <end position="130"/>
    </location>
</feature>
<feature type="repeat" description="LRR 4">
    <location>
        <begin position="133"/>
        <end position="154"/>
    </location>
</feature>
<feature type="repeat" description="LRR 5">
    <location>
        <begin position="157"/>
        <end position="178"/>
    </location>
</feature>
<feature type="domain" description="LRRCT">
    <location>
        <begin position="190"/>
        <end position="252"/>
    </location>
</feature>
<feature type="domain" description="Fibronectin type-III">
    <location>
        <begin position="312"/>
        <end position="399"/>
    </location>
</feature>
<feature type="repeat" description="LRR 6">
    <location>
        <begin position="318"/>
        <end position="342"/>
    </location>
</feature>
<feature type="region of interest" description="Disordered" evidence="3">
    <location>
        <begin position="259"/>
        <end position="291"/>
    </location>
</feature>
<feature type="region of interest" description="Disordered" evidence="3">
    <location>
        <begin position="517"/>
        <end position="552"/>
    </location>
</feature>
<feature type="region of interest" description="Disordered" evidence="3">
    <location>
        <begin position="624"/>
        <end position="649"/>
    </location>
</feature>
<feature type="region of interest" description="Disordered" evidence="3">
    <location>
        <begin position="696"/>
        <end position="732"/>
    </location>
</feature>
<feature type="compositionally biased region" description="Pro residues" evidence="3">
    <location>
        <begin position="274"/>
        <end position="285"/>
    </location>
</feature>
<feature type="compositionally biased region" description="Basic and acidic residues" evidence="3">
    <location>
        <begin position="529"/>
        <end position="541"/>
    </location>
</feature>
<feature type="compositionally biased region" description="Low complexity" evidence="3">
    <location>
        <begin position="632"/>
        <end position="649"/>
    </location>
</feature>
<feature type="compositionally biased region" description="Basic and acidic residues" evidence="3">
    <location>
        <begin position="696"/>
        <end position="705"/>
    </location>
</feature>
<feature type="compositionally biased region" description="Pro residues" evidence="3">
    <location>
        <begin position="713"/>
        <end position="727"/>
    </location>
</feature>
<feature type="modified residue" description="Phosphoserine" evidence="6">
    <location>
        <position position="461"/>
    </location>
</feature>
<feature type="modified residue" description="Phosphoserine" evidence="6">
    <location>
        <position position="645"/>
    </location>
</feature>
<feature type="glycosylation site" description="N-linked (GlcNAc...) asparagine" evidence="2">
    <location>
        <position position="59"/>
    </location>
</feature>
<feature type="glycosylation site" description="N-linked (GlcNAc...) asparagine" evidence="2">
    <location>
        <position position="85"/>
    </location>
</feature>
<feature type="glycosylation site" description="N-linked (GlcNAc...) asparagine" evidence="2">
    <location>
        <position position="90"/>
    </location>
</feature>
<feature type="glycosylation site" description="N-linked (GlcNAc...) asparagine" evidence="2">
    <location>
        <position position="122"/>
    </location>
</feature>
<feature type="glycosylation site" description="N-linked (GlcNAc...) asparagine" evidence="2">
    <location>
        <position position="210"/>
    </location>
</feature>
<feature type="glycosylation site" description="N-linked (GlcNAc...) asparagine" evidence="2">
    <location>
        <position position="376"/>
    </location>
</feature>
<protein>
    <recommendedName>
        <fullName>Protein ELFN1</fullName>
    </recommendedName>
    <alternativeName>
        <fullName>Extracellular leucine-rich repeat and fibronectin type-III domain-containing protein 1</fullName>
    </alternativeName>
    <alternativeName>
        <fullName>Protein phosphatase 1 regulatory subunit 28</fullName>
    </alternativeName>
</protein>
<name>ELFN1_HUMAN</name>
<dbReference type="EMBL" id="AC074389">
    <property type="status" value="NOT_ANNOTATED_CDS"/>
    <property type="molecule type" value="Genomic_DNA"/>
</dbReference>
<dbReference type="CCDS" id="CCDS59046.1"/>
<dbReference type="RefSeq" id="NP_001122108.1">
    <property type="nucleotide sequence ID" value="NM_001128636.4"/>
</dbReference>
<dbReference type="RefSeq" id="NP_001381116.1">
    <property type="nucleotide sequence ID" value="NM_001394187.1"/>
</dbReference>
<dbReference type="RefSeq" id="NP_001381117.1">
    <property type="nucleotide sequence ID" value="NM_001394188.1"/>
</dbReference>
<dbReference type="RefSeq" id="XP_006715788.1">
    <property type="nucleotide sequence ID" value="XM_006715725.4"/>
</dbReference>
<dbReference type="RefSeq" id="XP_006715789.1">
    <property type="nucleotide sequence ID" value="XM_006715726.2"/>
</dbReference>
<dbReference type="RefSeq" id="XP_006715790.1">
    <property type="nucleotide sequence ID" value="XM_006715727.4"/>
</dbReference>
<dbReference type="RefSeq" id="XP_011513699.1">
    <property type="nucleotide sequence ID" value="XM_011515397.2"/>
</dbReference>
<dbReference type="RefSeq" id="XP_011513700.1">
    <property type="nucleotide sequence ID" value="XM_011515398.3"/>
</dbReference>
<dbReference type="RefSeq" id="XP_011513703.1">
    <property type="nucleotide sequence ID" value="XM_011515401.3"/>
</dbReference>
<dbReference type="RefSeq" id="XP_016867692.1">
    <property type="nucleotide sequence ID" value="XM_017012203.1"/>
</dbReference>
<dbReference type="RefSeq" id="XP_047276318.1">
    <property type="nucleotide sequence ID" value="XM_047420362.1"/>
</dbReference>
<dbReference type="RefSeq" id="XP_047276319.1">
    <property type="nucleotide sequence ID" value="XM_047420363.1"/>
</dbReference>
<dbReference type="RefSeq" id="XP_054214170.1">
    <property type="nucleotide sequence ID" value="XM_054358195.1"/>
</dbReference>
<dbReference type="RefSeq" id="XP_054214171.1">
    <property type="nucleotide sequence ID" value="XM_054358196.1"/>
</dbReference>
<dbReference type="RefSeq" id="XP_054214172.1">
    <property type="nucleotide sequence ID" value="XM_054358197.1"/>
</dbReference>
<dbReference type="RefSeq" id="XP_054214173.1">
    <property type="nucleotide sequence ID" value="XM_054358198.1"/>
</dbReference>
<dbReference type="RefSeq" id="XP_054214174.1">
    <property type="nucleotide sequence ID" value="XM_054358199.1"/>
</dbReference>
<dbReference type="SMR" id="P0C7U0"/>
<dbReference type="BioGRID" id="134291">
    <property type="interactions" value="7"/>
</dbReference>
<dbReference type="FunCoup" id="P0C7U0">
    <property type="interactions" value="30"/>
</dbReference>
<dbReference type="IntAct" id="P0C7U0">
    <property type="interactions" value="3"/>
</dbReference>
<dbReference type="STRING" id="9606.ENSP00000456548"/>
<dbReference type="GlyCosmos" id="P0C7U0">
    <property type="glycosylation" value="7 sites, 1 glycan"/>
</dbReference>
<dbReference type="GlyGen" id="P0C7U0">
    <property type="glycosylation" value="9 sites, 4 N-linked glycans (3 sites), 1 O-linked glycan (1 site)"/>
</dbReference>
<dbReference type="iPTMnet" id="P0C7U0"/>
<dbReference type="PhosphoSitePlus" id="P0C7U0"/>
<dbReference type="BioMuta" id="ELFN1"/>
<dbReference type="DMDM" id="519668666"/>
<dbReference type="jPOST" id="P0C7U0"/>
<dbReference type="MassIVE" id="P0C7U0"/>
<dbReference type="PaxDb" id="9606-ENSP00000456548"/>
<dbReference type="PeptideAtlas" id="P0C7U0"/>
<dbReference type="ProteomicsDB" id="42259"/>
<dbReference type="ProteomicsDB" id="52368"/>
<dbReference type="Antibodypedia" id="67952">
    <property type="antibodies" value="58 antibodies from 15 providers"/>
</dbReference>
<dbReference type="DNASU" id="392617"/>
<dbReference type="Ensembl" id="ENST00000424383.5">
    <property type="protein sequence ID" value="ENSP00000456548.1"/>
    <property type="gene ID" value="ENSG00000225968.8"/>
</dbReference>
<dbReference type="Ensembl" id="ENST00000561626.4">
    <property type="protein sequence ID" value="ENSP00000457193.1"/>
    <property type="gene ID" value="ENSG00000225968.8"/>
</dbReference>
<dbReference type="Ensembl" id="ENST00000691883.1">
    <property type="protein sequence ID" value="ENSP00000510296.1"/>
    <property type="gene ID" value="ENSG00000225968.8"/>
</dbReference>
<dbReference type="GeneID" id="392617"/>
<dbReference type="KEGG" id="hsa:392617"/>
<dbReference type="MANE-Select" id="ENST00000424383.5">
    <property type="protein sequence ID" value="ENSP00000456548.1"/>
    <property type="RefSeq nucleotide sequence ID" value="NM_001128636.4"/>
    <property type="RefSeq protein sequence ID" value="NP_001122108.1"/>
</dbReference>
<dbReference type="UCSC" id="uc010ksg.2">
    <property type="organism name" value="human"/>
</dbReference>
<dbReference type="AGR" id="HGNC:33154"/>
<dbReference type="CTD" id="392617"/>
<dbReference type="DisGeNET" id="392617"/>
<dbReference type="GeneCards" id="ELFN1"/>
<dbReference type="HGNC" id="HGNC:33154">
    <property type="gene designation" value="ELFN1"/>
</dbReference>
<dbReference type="HPA" id="ENSG00000225968">
    <property type="expression patterns" value="Tissue enhanced (liver)"/>
</dbReference>
<dbReference type="MIM" id="614964">
    <property type="type" value="gene"/>
</dbReference>
<dbReference type="neXtProt" id="NX_P0C7U0"/>
<dbReference type="OpenTargets" id="ENSG00000225968"/>
<dbReference type="VEuPathDB" id="HostDB:ENSG00000225968"/>
<dbReference type="eggNOG" id="ENOG502QVFI">
    <property type="taxonomic scope" value="Eukaryota"/>
</dbReference>
<dbReference type="GeneTree" id="ENSGT00940000161391"/>
<dbReference type="HOGENOM" id="CLU_018770_0_0_1"/>
<dbReference type="InParanoid" id="P0C7U0"/>
<dbReference type="OMA" id="TCELYSN"/>
<dbReference type="OrthoDB" id="676979at2759"/>
<dbReference type="PAN-GO" id="P0C7U0">
    <property type="GO annotations" value="2 GO annotations based on evolutionary models"/>
</dbReference>
<dbReference type="PhylomeDB" id="P0C7U0"/>
<dbReference type="TreeFam" id="TF332887"/>
<dbReference type="PathwayCommons" id="P0C7U0"/>
<dbReference type="SignaLink" id="P0C7U0"/>
<dbReference type="BioGRID-ORCS" id="392617">
    <property type="hits" value="11 hits in 1147 CRISPR screens"/>
</dbReference>
<dbReference type="ChiTaRS" id="ELFN1">
    <property type="organism name" value="human"/>
</dbReference>
<dbReference type="GenomeRNAi" id="392617"/>
<dbReference type="Pharos" id="P0C7U0">
    <property type="development level" value="Tbio"/>
</dbReference>
<dbReference type="PRO" id="PR:P0C7U0"/>
<dbReference type="Proteomes" id="UP000005640">
    <property type="component" value="Chromosome 7"/>
</dbReference>
<dbReference type="RNAct" id="P0C7U0">
    <property type="molecule type" value="protein"/>
</dbReference>
<dbReference type="Bgee" id="ENSG00000225968">
    <property type="expression patterns" value="Expressed in buccal mucosa cell and 147 other cell types or tissues"/>
</dbReference>
<dbReference type="GO" id="GO:0043679">
    <property type="term" value="C:axon terminus"/>
    <property type="evidence" value="ECO:0007669"/>
    <property type="project" value="Ensembl"/>
</dbReference>
<dbReference type="GO" id="GO:0030425">
    <property type="term" value="C:dendrite"/>
    <property type="evidence" value="ECO:0000250"/>
    <property type="project" value="UniProtKB"/>
</dbReference>
<dbReference type="GO" id="GO:0060076">
    <property type="term" value="C:excitatory synapse"/>
    <property type="evidence" value="ECO:0000250"/>
    <property type="project" value="UniProtKB"/>
</dbReference>
<dbReference type="GO" id="GO:0031012">
    <property type="term" value="C:extracellular matrix"/>
    <property type="evidence" value="ECO:0000318"/>
    <property type="project" value="GO_Central"/>
</dbReference>
<dbReference type="GO" id="GO:0005615">
    <property type="term" value="C:extracellular space"/>
    <property type="evidence" value="ECO:0000318"/>
    <property type="project" value="GO_Central"/>
</dbReference>
<dbReference type="GO" id="GO:0098978">
    <property type="term" value="C:glutamatergic synapse"/>
    <property type="evidence" value="ECO:0007669"/>
    <property type="project" value="Ensembl"/>
</dbReference>
<dbReference type="GO" id="GO:0098839">
    <property type="term" value="C:postsynaptic density membrane"/>
    <property type="evidence" value="ECO:0007669"/>
    <property type="project" value="Ensembl"/>
</dbReference>
<dbReference type="GO" id="GO:0004864">
    <property type="term" value="F:protein phosphatase inhibitor activity"/>
    <property type="evidence" value="ECO:0007669"/>
    <property type="project" value="UniProtKB-KW"/>
</dbReference>
<dbReference type="GO" id="GO:0007268">
    <property type="term" value="P:chemical synaptic transmission"/>
    <property type="evidence" value="ECO:0007669"/>
    <property type="project" value="Ensembl"/>
</dbReference>
<dbReference type="GO" id="GO:0045184">
    <property type="term" value="P:establishment of protein localization"/>
    <property type="evidence" value="ECO:0007669"/>
    <property type="project" value="Ensembl"/>
</dbReference>
<dbReference type="GO" id="GO:0007416">
    <property type="term" value="P:synapse assembly"/>
    <property type="evidence" value="ECO:0007669"/>
    <property type="project" value="Ensembl"/>
</dbReference>
<dbReference type="GO" id="GO:0050808">
    <property type="term" value="P:synapse organization"/>
    <property type="evidence" value="ECO:0000250"/>
    <property type="project" value="UniProtKB"/>
</dbReference>
<dbReference type="GO" id="GO:0099560">
    <property type="term" value="P:synaptic membrane adhesion"/>
    <property type="evidence" value="ECO:0007669"/>
    <property type="project" value="Ensembl"/>
</dbReference>
<dbReference type="GO" id="GO:0007601">
    <property type="term" value="P:visual perception"/>
    <property type="evidence" value="ECO:0007669"/>
    <property type="project" value="Ensembl"/>
</dbReference>
<dbReference type="FunFam" id="3.80.10.10:FF:000047">
    <property type="entry name" value="protein phosphatase 1 regulatory subunit 29"/>
    <property type="match status" value="1"/>
</dbReference>
<dbReference type="Gene3D" id="3.80.10.10">
    <property type="entry name" value="Ribonuclease Inhibitor"/>
    <property type="match status" value="1"/>
</dbReference>
<dbReference type="InterPro" id="IPR000483">
    <property type="entry name" value="Cys-rich_flank_reg_C"/>
</dbReference>
<dbReference type="InterPro" id="IPR055106">
    <property type="entry name" value="ELFN_Fn3"/>
</dbReference>
<dbReference type="InterPro" id="IPR001611">
    <property type="entry name" value="Leu-rich_rpt"/>
</dbReference>
<dbReference type="InterPro" id="IPR003591">
    <property type="entry name" value="Leu-rich_rpt_typical-subtyp"/>
</dbReference>
<dbReference type="InterPro" id="IPR032675">
    <property type="entry name" value="LRR_dom_sf"/>
</dbReference>
<dbReference type="InterPro" id="IPR050541">
    <property type="entry name" value="LRR_TM_domain-containing"/>
</dbReference>
<dbReference type="PANTHER" id="PTHR24369">
    <property type="entry name" value="ANTIGEN BSP, PUTATIVE-RELATED"/>
    <property type="match status" value="1"/>
</dbReference>
<dbReference type="PANTHER" id="PTHR24369:SF204">
    <property type="entry name" value="PROTEIN PHOSPHATASE 1 REGULATORY SUBUNIT 29-RELATED"/>
    <property type="match status" value="1"/>
</dbReference>
<dbReference type="Pfam" id="PF22986">
    <property type="entry name" value="Fn3_ELFN"/>
    <property type="match status" value="1"/>
</dbReference>
<dbReference type="Pfam" id="PF13855">
    <property type="entry name" value="LRR_8"/>
    <property type="match status" value="1"/>
</dbReference>
<dbReference type="SMART" id="SM00369">
    <property type="entry name" value="LRR_TYP"/>
    <property type="match status" value="4"/>
</dbReference>
<dbReference type="SMART" id="SM00082">
    <property type="entry name" value="LRRCT"/>
    <property type="match status" value="1"/>
</dbReference>
<dbReference type="SUPFAM" id="SSF52058">
    <property type="entry name" value="L domain-like"/>
    <property type="match status" value="1"/>
</dbReference>
<dbReference type="PROSITE" id="PS51450">
    <property type="entry name" value="LRR"/>
    <property type="match status" value="5"/>
</dbReference>
<comment type="function">
    <text evidence="1 4">Postsynaptic protein that regulates circuit dynamics in the central nervous system by modulating the temporal dynamics of interneuron recruitment. Specifically present in excitatory synapses onto oriens-lacunosum molecular (OLM) interneurons and acts as a regulator of presynaptic release probability to direct the formation of highly facilitating pyramidal-OLM synapses (By similarity). Inhibits phosphatase activity of protein phosphatase 1 (PP1) complexes.</text>
</comment>
<comment type="subunit">
    <text evidence="4">Interacts with PPP1CA.</text>
</comment>
<comment type="subcellular location">
    <subcellularLocation>
        <location evidence="5">Membrane</location>
        <topology evidence="5">Single-pass type I membrane protein</topology>
    </subcellularLocation>
    <subcellularLocation>
        <location evidence="1">Cell projection</location>
        <location evidence="1">Dendrite</location>
    </subcellularLocation>
    <text evidence="1">Localizes to excitatory synapses onto somatostatin (Sst)-containing oriens-lacunosum moleculare (O-LM) interneurons.</text>
</comment>
<sequence length="828" mass="90477">MAGRGWGALWVCVAAATLLHAGGLARADCWLIEGDKGFVWLAICSQNQPPYEAIPQQINSTIVDLRLNENRIRSVQYASLSRFGNLTYLNLTKNEIGYIEDGAFSGQFNLQVLQLGYNRLRNLTEGMLRGLGKLEYLYLQANLIEVVMASSFWECPNIVNIDLSMNRIQQLNSGTFAGLAKLSVCELYSNPFYCSCELLGFLRWLAAFTNATQTYDRMQCESPPVYSGYYLLGQGRRGHRSILSKLQSVCTEDSYAAEVVGPPRPASGRSQPGRSPPPPPPPEPSDMPCADDECFSGDGTTPLVALPTLATQAEARPLIKVKQLTQNSATITVQLPSPFHRMYTLEHFNNSKASTVSRLTKAQEEIRLTNLFTLTNYTYCVVSTSAGLRHNHTCLTICLPRLPSPPGPVPSPSTATHYIMTILGCLFGMVLVLGAVYYCLRRRRRQEEKHKKAASAAAAGSLKKTIIELKYGPELEAPGLAPLSQGPLLGPEAVTRIPYLPAAGEVEQYKLVESADTPKASKGSYMEVRTGDPPERRDCELGRPGPDSQSSVAEISTIAKEVDKVNQIINNCIDALKSESTSFQGVKSGPVSVAEPPLVLLSEPLAAKHGFLAPGYKDAFGHSLQRHHSVEAAGPPRASTSSSGSVRSPRAFRAEAVGVHKAAAAEAKYIEKGSPAADAILTVTPAAAVLRAEAEKGRQYGEHRHSYPGSHPAEPPAPPGPPPPPPHEGLGRKASILEPLTRPRPRDLAYSQLSPQYHSLSYSSSPEYTCRASQSIWERFRLSRRRHKEEEEFMAAGHALRKKVQFAKDEDLHDILDYWKGVSAQHKS</sequence>
<keyword id="KW-0966">Cell projection</keyword>
<keyword id="KW-0325">Glycoprotein</keyword>
<keyword id="KW-0433">Leucine-rich repeat</keyword>
<keyword id="KW-0472">Membrane</keyword>
<keyword id="KW-0597">Phosphoprotein</keyword>
<keyword id="KW-0650">Protein phosphatase inhibitor</keyword>
<keyword id="KW-1267">Proteomics identification</keyword>
<keyword id="KW-1185">Reference proteome</keyword>
<keyword id="KW-0677">Repeat</keyword>
<keyword id="KW-0732">Signal</keyword>
<keyword id="KW-0812">Transmembrane</keyword>
<keyword id="KW-1133">Transmembrane helix</keyword>
<proteinExistence type="evidence at protein level"/>
<evidence type="ECO:0000250" key="1"/>
<evidence type="ECO:0000255" key="2"/>
<evidence type="ECO:0000256" key="3">
    <source>
        <dbReference type="SAM" id="MobiDB-lite"/>
    </source>
</evidence>
<evidence type="ECO:0000269" key="4">
    <source>
    </source>
</evidence>
<evidence type="ECO:0000305" key="5"/>
<evidence type="ECO:0007744" key="6">
    <source>
    </source>
</evidence>